<dbReference type="EC" id="6.3.2.4" evidence="2"/>
<dbReference type="EMBL" id="CT978603">
    <property type="protein sequence ID" value="CAK27506.1"/>
    <property type="molecule type" value="Genomic_DNA"/>
</dbReference>
<dbReference type="SMR" id="A5GRJ7"/>
<dbReference type="STRING" id="316278.SynRCC307_0603"/>
<dbReference type="KEGG" id="syr:SynRCC307_0603"/>
<dbReference type="eggNOG" id="COG1181">
    <property type="taxonomic scope" value="Bacteria"/>
</dbReference>
<dbReference type="HOGENOM" id="CLU_039268_0_0_3"/>
<dbReference type="OrthoDB" id="9813261at2"/>
<dbReference type="UniPathway" id="UPA00219"/>
<dbReference type="Proteomes" id="UP000001115">
    <property type="component" value="Chromosome"/>
</dbReference>
<dbReference type="GO" id="GO:0005829">
    <property type="term" value="C:cytosol"/>
    <property type="evidence" value="ECO:0007669"/>
    <property type="project" value="TreeGrafter"/>
</dbReference>
<dbReference type="GO" id="GO:0005524">
    <property type="term" value="F:ATP binding"/>
    <property type="evidence" value="ECO:0007669"/>
    <property type="project" value="UniProtKB-KW"/>
</dbReference>
<dbReference type="GO" id="GO:0008716">
    <property type="term" value="F:D-alanine-D-alanine ligase activity"/>
    <property type="evidence" value="ECO:0007669"/>
    <property type="project" value="UniProtKB-UniRule"/>
</dbReference>
<dbReference type="GO" id="GO:0046872">
    <property type="term" value="F:metal ion binding"/>
    <property type="evidence" value="ECO:0007669"/>
    <property type="project" value="UniProtKB-KW"/>
</dbReference>
<dbReference type="GO" id="GO:0071555">
    <property type="term" value="P:cell wall organization"/>
    <property type="evidence" value="ECO:0007669"/>
    <property type="project" value="UniProtKB-KW"/>
</dbReference>
<dbReference type="GO" id="GO:0009252">
    <property type="term" value="P:peptidoglycan biosynthetic process"/>
    <property type="evidence" value="ECO:0007669"/>
    <property type="project" value="UniProtKB-UniRule"/>
</dbReference>
<dbReference type="GO" id="GO:0008360">
    <property type="term" value="P:regulation of cell shape"/>
    <property type="evidence" value="ECO:0007669"/>
    <property type="project" value="UniProtKB-KW"/>
</dbReference>
<dbReference type="FunFam" id="3.30.1490.20:FF:000007">
    <property type="entry name" value="D-alanine--D-alanine ligase"/>
    <property type="match status" value="1"/>
</dbReference>
<dbReference type="FunFam" id="3.30.470.20:FF:000008">
    <property type="entry name" value="D-alanine--D-alanine ligase"/>
    <property type="match status" value="1"/>
</dbReference>
<dbReference type="Gene3D" id="3.40.50.20">
    <property type="match status" value="1"/>
</dbReference>
<dbReference type="Gene3D" id="3.30.1490.20">
    <property type="entry name" value="ATP-grasp fold, A domain"/>
    <property type="match status" value="1"/>
</dbReference>
<dbReference type="Gene3D" id="3.30.470.20">
    <property type="entry name" value="ATP-grasp fold, B domain"/>
    <property type="match status" value="1"/>
</dbReference>
<dbReference type="HAMAP" id="MF_00047">
    <property type="entry name" value="Dala_Dala_lig"/>
    <property type="match status" value="1"/>
</dbReference>
<dbReference type="InterPro" id="IPR011761">
    <property type="entry name" value="ATP-grasp"/>
</dbReference>
<dbReference type="InterPro" id="IPR013815">
    <property type="entry name" value="ATP_grasp_subdomain_1"/>
</dbReference>
<dbReference type="InterPro" id="IPR000291">
    <property type="entry name" value="D-Ala_lig_Van_CS"/>
</dbReference>
<dbReference type="InterPro" id="IPR005905">
    <property type="entry name" value="D_ala_D_ala"/>
</dbReference>
<dbReference type="InterPro" id="IPR011095">
    <property type="entry name" value="Dala_Dala_lig_C"/>
</dbReference>
<dbReference type="InterPro" id="IPR011127">
    <property type="entry name" value="Dala_Dala_lig_N"/>
</dbReference>
<dbReference type="InterPro" id="IPR016185">
    <property type="entry name" value="PreATP-grasp_dom_sf"/>
</dbReference>
<dbReference type="NCBIfam" id="TIGR01205">
    <property type="entry name" value="D_ala_D_alaTIGR"/>
    <property type="match status" value="1"/>
</dbReference>
<dbReference type="NCBIfam" id="NF002528">
    <property type="entry name" value="PRK01966.1-4"/>
    <property type="match status" value="1"/>
</dbReference>
<dbReference type="PANTHER" id="PTHR23132">
    <property type="entry name" value="D-ALANINE--D-ALANINE LIGASE"/>
    <property type="match status" value="1"/>
</dbReference>
<dbReference type="PANTHER" id="PTHR23132:SF25">
    <property type="entry name" value="D-ALANINE--D-ALANINE LIGASE A"/>
    <property type="match status" value="1"/>
</dbReference>
<dbReference type="Pfam" id="PF07478">
    <property type="entry name" value="Dala_Dala_lig_C"/>
    <property type="match status" value="1"/>
</dbReference>
<dbReference type="Pfam" id="PF01820">
    <property type="entry name" value="Dala_Dala_lig_N"/>
    <property type="match status" value="1"/>
</dbReference>
<dbReference type="PIRSF" id="PIRSF039102">
    <property type="entry name" value="Ddl/VanB"/>
    <property type="match status" value="1"/>
</dbReference>
<dbReference type="SUPFAM" id="SSF56059">
    <property type="entry name" value="Glutathione synthetase ATP-binding domain-like"/>
    <property type="match status" value="1"/>
</dbReference>
<dbReference type="SUPFAM" id="SSF52440">
    <property type="entry name" value="PreATP-grasp domain"/>
    <property type="match status" value="1"/>
</dbReference>
<dbReference type="PROSITE" id="PS50975">
    <property type="entry name" value="ATP_GRASP"/>
    <property type="match status" value="1"/>
</dbReference>
<dbReference type="PROSITE" id="PS00843">
    <property type="entry name" value="DALA_DALA_LIGASE_1"/>
    <property type="match status" value="1"/>
</dbReference>
<dbReference type="PROSITE" id="PS00844">
    <property type="entry name" value="DALA_DALA_LIGASE_2"/>
    <property type="match status" value="1"/>
</dbReference>
<evidence type="ECO:0000250" key="1"/>
<evidence type="ECO:0000255" key="2">
    <source>
        <dbReference type="HAMAP-Rule" id="MF_00047"/>
    </source>
</evidence>
<accession>A5GRJ7</accession>
<reference key="1">
    <citation type="submission" date="2006-05" db="EMBL/GenBank/DDBJ databases">
        <authorList>
            <consortium name="Genoscope"/>
        </authorList>
    </citation>
    <scope>NUCLEOTIDE SEQUENCE [LARGE SCALE GENOMIC DNA]</scope>
    <source>
        <strain>RCC307</strain>
    </source>
</reference>
<keyword id="KW-0067">ATP-binding</keyword>
<keyword id="KW-0133">Cell shape</keyword>
<keyword id="KW-0961">Cell wall biogenesis/degradation</keyword>
<keyword id="KW-0963">Cytoplasm</keyword>
<keyword id="KW-0436">Ligase</keyword>
<keyword id="KW-0460">Magnesium</keyword>
<keyword id="KW-0464">Manganese</keyword>
<keyword id="KW-0479">Metal-binding</keyword>
<keyword id="KW-0547">Nucleotide-binding</keyword>
<keyword id="KW-0573">Peptidoglycan synthesis</keyword>
<keyword id="KW-1185">Reference proteome</keyword>
<protein>
    <recommendedName>
        <fullName evidence="2">D-alanine--D-alanine ligase</fullName>
        <ecNumber evidence="2">6.3.2.4</ecNumber>
    </recommendedName>
    <alternativeName>
        <fullName evidence="2">D-Ala-D-Ala ligase</fullName>
    </alternativeName>
    <alternativeName>
        <fullName evidence="2">D-alanylalanine synthetase</fullName>
    </alternativeName>
</protein>
<name>DDL_SYNR3</name>
<comment type="function">
    <text evidence="2">Cell wall formation.</text>
</comment>
<comment type="catalytic activity">
    <reaction evidence="2">
        <text>2 D-alanine + ATP = D-alanyl-D-alanine + ADP + phosphate + H(+)</text>
        <dbReference type="Rhea" id="RHEA:11224"/>
        <dbReference type="ChEBI" id="CHEBI:15378"/>
        <dbReference type="ChEBI" id="CHEBI:30616"/>
        <dbReference type="ChEBI" id="CHEBI:43474"/>
        <dbReference type="ChEBI" id="CHEBI:57416"/>
        <dbReference type="ChEBI" id="CHEBI:57822"/>
        <dbReference type="ChEBI" id="CHEBI:456216"/>
        <dbReference type="EC" id="6.3.2.4"/>
    </reaction>
</comment>
<comment type="cofactor">
    <cofactor evidence="1">
        <name>Mg(2+)</name>
        <dbReference type="ChEBI" id="CHEBI:18420"/>
    </cofactor>
    <cofactor evidence="1">
        <name>Mn(2+)</name>
        <dbReference type="ChEBI" id="CHEBI:29035"/>
    </cofactor>
    <text evidence="1">Binds 2 magnesium or manganese ions per subunit.</text>
</comment>
<comment type="pathway">
    <text evidence="2">Cell wall biogenesis; peptidoglycan biosynthesis.</text>
</comment>
<comment type="subcellular location">
    <subcellularLocation>
        <location evidence="2">Cytoplasm</location>
    </subcellularLocation>
</comment>
<comment type="similarity">
    <text evidence="2">Belongs to the D-alanine--D-alanine ligase family.</text>
</comment>
<sequence>MSSQQSKVVGLIFGGASGEHDVSIRSAATVAEGLSSGANKERYRVQHVYIDRQGRWWGDATARQVLSSGQALADDGSRPGFSGFPDGCLEVEIWYPVLHGPNGEDGTIQGLFSLMQRPFVGSGVLGSAVGMDKLAMKAAFSAAGLPQGPYRPVLASELVSNSQLLEELETQLGYPCFIKPANLGSSVGISKATNRSELQAGLDLAASHDSRLLVEKGLQVRELECAVLGGQHLKASVLGEVSFDADWYDYETKYSSGLSSTQIPADLPEAISSRAQHLAIEAVQAVGASGLSRVDFFYEEASGNLLINEINTLPGFTSQSMYPMLWKASGVPLEELVHQLLELAQ</sequence>
<gene>
    <name evidence="2" type="primary">ddl</name>
    <name type="ordered locus">SynRCC307_0603</name>
</gene>
<feature type="chain" id="PRO_0000341181" description="D-alanine--D-alanine ligase">
    <location>
        <begin position="1"/>
        <end position="345"/>
    </location>
</feature>
<feature type="domain" description="ATP-grasp" evidence="2">
    <location>
        <begin position="137"/>
        <end position="342"/>
    </location>
</feature>
<feature type="binding site" evidence="2">
    <location>
        <begin position="169"/>
        <end position="224"/>
    </location>
    <ligand>
        <name>ATP</name>
        <dbReference type="ChEBI" id="CHEBI:30616"/>
    </ligand>
</feature>
<feature type="binding site" evidence="2">
    <location>
        <position position="295"/>
    </location>
    <ligand>
        <name>Mg(2+)</name>
        <dbReference type="ChEBI" id="CHEBI:18420"/>
        <label>1</label>
    </ligand>
</feature>
<feature type="binding site" evidence="2">
    <location>
        <position position="309"/>
    </location>
    <ligand>
        <name>Mg(2+)</name>
        <dbReference type="ChEBI" id="CHEBI:18420"/>
        <label>1</label>
    </ligand>
</feature>
<feature type="binding site" evidence="2">
    <location>
        <position position="309"/>
    </location>
    <ligand>
        <name>Mg(2+)</name>
        <dbReference type="ChEBI" id="CHEBI:18420"/>
        <label>2</label>
    </ligand>
</feature>
<feature type="binding site" evidence="2">
    <location>
        <position position="311"/>
    </location>
    <ligand>
        <name>Mg(2+)</name>
        <dbReference type="ChEBI" id="CHEBI:18420"/>
        <label>2</label>
    </ligand>
</feature>
<organism>
    <name type="scientific">Synechococcus sp. (strain RCC307)</name>
    <dbReference type="NCBI Taxonomy" id="316278"/>
    <lineage>
        <taxon>Bacteria</taxon>
        <taxon>Bacillati</taxon>
        <taxon>Cyanobacteriota</taxon>
        <taxon>Cyanophyceae</taxon>
        <taxon>Synechococcales</taxon>
        <taxon>Synechococcaceae</taxon>
        <taxon>Synechococcus</taxon>
    </lineage>
</organism>
<proteinExistence type="inferred from homology"/>